<dbReference type="EMBL" id="CH473949">
    <property type="protein sequence ID" value="EDL79766.1"/>
    <property type="molecule type" value="Genomic_DNA"/>
</dbReference>
<dbReference type="EMBL" id="BC085873">
    <property type="protein sequence ID" value="AAH85873.1"/>
    <property type="molecule type" value="mRNA"/>
</dbReference>
<dbReference type="RefSeq" id="NP_001020213.1">
    <property type="nucleotide sequence ID" value="NM_001025042.2"/>
</dbReference>
<dbReference type="SMR" id="Q5U2T4"/>
<dbReference type="FunCoup" id="Q5U2T4">
    <property type="interactions" value="25"/>
</dbReference>
<dbReference type="STRING" id="10116.ENSRNOP00000006203"/>
<dbReference type="GlyCosmos" id="Q5U2T4">
    <property type="glycosylation" value="1 site, No reported glycans"/>
</dbReference>
<dbReference type="GlyGen" id="Q5U2T4">
    <property type="glycosylation" value="1 site"/>
</dbReference>
<dbReference type="PhosphoSitePlus" id="Q5U2T4"/>
<dbReference type="PaxDb" id="10116-ENSRNOP00000006203"/>
<dbReference type="Ensembl" id="ENSRNOT00000006203.4">
    <property type="protein sequence ID" value="ENSRNOP00000006203.1"/>
    <property type="gene ID" value="ENSRNOG00000004699.4"/>
</dbReference>
<dbReference type="GeneID" id="499856"/>
<dbReference type="KEGG" id="rno:499856"/>
<dbReference type="UCSC" id="RGD:1563711">
    <property type="organism name" value="rat"/>
</dbReference>
<dbReference type="AGR" id="RGD:1563711"/>
<dbReference type="CTD" id="387758"/>
<dbReference type="RGD" id="1563711">
    <property type="gene designation" value="Fibin"/>
</dbReference>
<dbReference type="eggNOG" id="ENOG502QSW0">
    <property type="taxonomic scope" value="Eukaryota"/>
</dbReference>
<dbReference type="GeneTree" id="ENSGT00390000007623"/>
<dbReference type="HOGENOM" id="CLU_1323584_0_0_1"/>
<dbReference type="InParanoid" id="Q5U2T4"/>
<dbReference type="OMA" id="CHGYFDG"/>
<dbReference type="OrthoDB" id="9434858at2759"/>
<dbReference type="PhylomeDB" id="Q5U2T4"/>
<dbReference type="TreeFam" id="TF331989"/>
<dbReference type="PRO" id="PR:Q5U2T4"/>
<dbReference type="Proteomes" id="UP000002494">
    <property type="component" value="Chromosome 3"/>
</dbReference>
<dbReference type="Proteomes" id="UP000234681">
    <property type="component" value="Chromosome 3"/>
</dbReference>
<dbReference type="Bgee" id="ENSRNOG00000004699">
    <property type="expression patterns" value="Expressed in colon and 17 other cell types or tissues"/>
</dbReference>
<dbReference type="GO" id="GO:0005783">
    <property type="term" value="C:endoplasmic reticulum"/>
    <property type="evidence" value="ECO:0000266"/>
    <property type="project" value="RGD"/>
</dbReference>
<dbReference type="GO" id="GO:0005576">
    <property type="term" value="C:extracellular region"/>
    <property type="evidence" value="ECO:0007669"/>
    <property type="project" value="UniProtKB-SubCell"/>
</dbReference>
<dbReference type="GO" id="GO:0005794">
    <property type="term" value="C:Golgi apparatus"/>
    <property type="evidence" value="ECO:0007669"/>
    <property type="project" value="UniProtKB-SubCell"/>
</dbReference>
<dbReference type="GO" id="GO:0042803">
    <property type="term" value="F:protein homodimerization activity"/>
    <property type="evidence" value="ECO:0000266"/>
    <property type="project" value="RGD"/>
</dbReference>
<dbReference type="InterPro" id="IPR026772">
    <property type="entry name" value="Fibin"/>
</dbReference>
<dbReference type="PANTHER" id="PTHR31185">
    <property type="entry name" value="FIN BUD INITIATION FACTOR FIBIN"/>
    <property type="match status" value="1"/>
</dbReference>
<dbReference type="PANTHER" id="PTHR31185:SF0">
    <property type="entry name" value="FIN BUD INITIATION FACTOR HOMOLOG"/>
    <property type="match status" value="1"/>
</dbReference>
<dbReference type="Pfam" id="PF15819">
    <property type="entry name" value="Fibin"/>
    <property type="match status" value="1"/>
</dbReference>
<reference key="1">
    <citation type="submission" date="2005-07" db="EMBL/GenBank/DDBJ databases">
        <authorList>
            <person name="Mural R.J."/>
            <person name="Adams M.D."/>
            <person name="Myers E.W."/>
            <person name="Smith H.O."/>
            <person name="Venter J.C."/>
        </authorList>
    </citation>
    <scope>NUCLEOTIDE SEQUENCE [LARGE SCALE GENOMIC DNA]</scope>
    <source>
        <strain>Brown Norway</strain>
    </source>
</reference>
<reference key="2">
    <citation type="journal article" date="2004" name="Genome Res.">
        <title>The status, quality, and expansion of the NIH full-length cDNA project: the Mammalian Gene Collection (MGC).</title>
        <authorList>
            <consortium name="The MGC Project Team"/>
        </authorList>
    </citation>
    <scope>NUCLEOTIDE SEQUENCE [LARGE SCALE MRNA]</scope>
    <source>
        <tissue>Heart</tissue>
    </source>
</reference>
<sequence length="217" mass="24754">MMFTKLIWMGFFCHLCRGYFDGPLYPEMSNGTLHHYFVPDGDYEENDDPEKCQLLFRVSDRRRCSQGEGGQASSLLSLTLREEFTVLGRQVEDAGRVLEGISKSISYDLDGEESYGKYLRRESHQIGDAYSNSDKSLTELESKFKQGQEQDSRQESRLNEDFLGMLVHTRSLLKETLGISVGLRDKYELLAHTIRSHGTRLGRLKSDYLEGGGQKMG</sequence>
<accession>Q5U2T4</accession>
<gene>
    <name type="primary">Fibin</name>
</gene>
<proteinExistence type="evidence at transcript level"/>
<keyword id="KW-1015">Disulfide bond</keyword>
<keyword id="KW-0256">Endoplasmic reticulum</keyword>
<keyword id="KW-0325">Glycoprotein</keyword>
<keyword id="KW-0333">Golgi apparatus</keyword>
<keyword id="KW-1185">Reference proteome</keyword>
<keyword id="KW-0964">Secreted</keyword>
<keyword id="KW-0732">Signal</keyword>
<organism>
    <name type="scientific">Rattus norvegicus</name>
    <name type="common">Rat</name>
    <dbReference type="NCBI Taxonomy" id="10116"/>
    <lineage>
        <taxon>Eukaryota</taxon>
        <taxon>Metazoa</taxon>
        <taxon>Chordata</taxon>
        <taxon>Craniata</taxon>
        <taxon>Vertebrata</taxon>
        <taxon>Euteleostomi</taxon>
        <taxon>Mammalia</taxon>
        <taxon>Eutheria</taxon>
        <taxon>Euarchontoglires</taxon>
        <taxon>Glires</taxon>
        <taxon>Rodentia</taxon>
        <taxon>Myomorpha</taxon>
        <taxon>Muroidea</taxon>
        <taxon>Muridae</taxon>
        <taxon>Murinae</taxon>
        <taxon>Rattus</taxon>
    </lineage>
</organism>
<name>FIBIN_RAT</name>
<comment type="subunit">
    <text evidence="1">Homodimer; disulfide-linked. Seems to also exist as monomers (By similarity).</text>
</comment>
<comment type="subcellular location">
    <subcellularLocation>
        <location evidence="1">Secreted</location>
    </subcellularLocation>
    <subcellularLocation>
        <location evidence="1">Golgi apparatus</location>
    </subcellularLocation>
    <subcellularLocation>
        <location evidence="1">Endoplasmic reticulum</location>
    </subcellularLocation>
</comment>
<comment type="similarity">
    <text evidence="3">Belongs to the FIBIN family.</text>
</comment>
<feature type="signal peptide" evidence="1">
    <location>
        <begin position="1"/>
        <end position="18"/>
    </location>
</feature>
<feature type="chain" id="PRO_0000349213" description="Fin bud initiation factor homolog">
    <location>
        <begin position="19"/>
        <end position="217"/>
    </location>
</feature>
<feature type="glycosylation site" description="N-linked (GlcNAc...) asparagine" evidence="2">
    <location>
        <position position="30"/>
    </location>
</feature>
<feature type="disulfide bond" description="Interchain" evidence="1">
    <location>
        <position position="52"/>
    </location>
</feature>
<feature type="disulfide bond" description="Interchain" evidence="1">
    <location>
        <position position="64"/>
    </location>
</feature>
<protein>
    <recommendedName>
        <fullName>Fin bud initiation factor homolog</fullName>
    </recommendedName>
</protein>
<evidence type="ECO:0000250" key="1"/>
<evidence type="ECO:0000255" key="2"/>
<evidence type="ECO:0000305" key="3"/>